<protein>
    <recommendedName>
        <fullName>T-box transcription factor TBX15</fullName>
        <shortName>T-box protein 15</shortName>
    </recommendedName>
    <alternativeName>
        <fullName>T-box transcription factor TBX14</fullName>
        <shortName>T-box protein 14</shortName>
    </alternativeName>
</protein>
<reference key="1">
    <citation type="journal article" date="2004" name="Nat. Genet.">
        <title>Complete sequencing and characterization of 21,243 full-length human cDNAs.</title>
        <authorList>
            <person name="Ota T."/>
            <person name="Suzuki Y."/>
            <person name="Nishikawa T."/>
            <person name="Otsuki T."/>
            <person name="Sugiyama T."/>
            <person name="Irie R."/>
            <person name="Wakamatsu A."/>
            <person name="Hayashi K."/>
            <person name="Sato H."/>
            <person name="Nagai K."/>
            <person name="Kimura K."/>
            <person name="Makita H."/>
            <person name="Sekine M."/>
            <person name="Obayashi M."/>
            <person name="Nishi T."/>
            <person name="Shibahara T."/>
            <person name="Tanaka T."/>
            <person name="Ishii S."/>
            <person name="Yamamoto J."/>
            <person name="Saito K."/>
            <person name="Kawai Y."/>
            <person name="Isono Y."/>
            <person name="Nakamura Y."/>
            <person name="Nagahari K."/>
            <person name="Murakami K."/>
            <person name="Yasuda T."/>
            <person name="Iwayanagi T."/>
            <person name="Wagatsuma M."/>
            <person name="Shiratori A."/>
            <person name="Sudo H."/>
            <person name="Hosoiri T."/>
            <person name="Kaku Y."/>
            <person name="Kodaira H."/>
            <person name="Kondo H."/>
            <person name="Sugawara M."/>
            <person name="Takahashi M."/>
            <person name="Kanda K."/>
            <person name="Yokoi T."/>
            <person name="Furuya T."/>
            <person name="Kikkawa E."/>
            <person name="Omura Y."/>
            <person name="Abe K."/>
            <person name="Kamihara K."/>
            <person name="Katsuta N."/>
            <person name="Sato K."/>
            <person name="Tanikawa M."/>
            <person name="Yamazaki M."/>
            <person name="Ninomiya K."/>
            <person name="Ishibashi T."/>
            <person name="Yamashita H."/>
            <person name="Murakawa K."/>
            <person name="Fujimori K."/>
            <person name="Tanai H."/>
            <person name="Kimata M."/>
            <person name="Watanabe M."/>
            <person name="Hiraoka S."/>
            <person name="Chiba Y."/>
            <person name="Ishida S."/>
            <person name="Ono Y."/>
            <person name="Takiguchi S."/>
            <person name="Watanabe S."/>
            <person name="Yosida M."/>
            <person name="Hotuta T."/>
            <person name="Kusano J."/>
            <person name="Kanehori K."/>
            <person name="Takahashi-Fujii A."/>
            <person name="Hara H."/>
            <person name="Tanase T.-O."/>
            <person name="Nomura Y."/>
            <person name="Togiya S."/>
            <person name="Komai F."/>
            <person name="Hara R."/>
            <person name="Takeuchi K."/>
            <person name="Arita M."/>
            <person name="Imose N."/>
            <person name="Musashino K."/>
            <person name="Yuuki H."/>
            <person name="Oshima A."/>
            <person name="Sasaki N."/>
            <person name="Aotsuka S."/>
            <person name="Yoshikawa Y."/>
            <person name="Matsunawa H."/>
            <person name="Ichihara T."/>
            <person name="Shiohata N."/>
            <person name="Sano S."/>
            <person name="Moriya S."/>
            <person name="Momiyama H."/>
            <person name="Satoh N."/>
            <person name="Takami S."/>
            <person name="Terashima Y."/>
            <person name="Suzuki O."/>
            <person name="Nakagawa S."/>
            <person name="Senoh A."/>
            <person name="Mizoguchi H."/>
            <person name="Goto Y."/>
            <person name="Shimizu F."/>
            <person name="Wakebe H."/>
            <person name="Hishigaki H."/>
            <person name="Watanabe T."/>
            <person name="Sugiyama A."/>
            <person name="Takemoto M."/>
            <person name="Kawakami B."/>
            <person name="Yamazaki M."/>
            <person name="Watanabe K."/>
            <person name="Kumagai A."/>
            <person name="Itakura S."/>
            <person name="Fukuzumi Y."/>
            <person name="Fujimori Y."/>
            <person name="Komiyama M."/>
            <person name="Tashiro H."/>
            <person name="Tanigami A."/>
            <person name="Fujiwara T."/>
            <person name="Ono T."/>
            <person name="Yamada K."/>
            <person name="Fujii Y."/>
            <person name="Ozaki K."/>
            <person name="Hirao M."/>
            <person name="Ohmori Y."/>
            <person name="Kawabata A."/>
            <person name="Hikiji T."/>
            <person name="Kobatake N."/>
            <person name="Inagaki H."/>
            <person name="Ikema Y."/>
            <person name="Okamoto S."/>
            <person name="Okitani R."/>
            <person name="Kawakami T."/>
            <person name="Noguchi S."/>
            <person name="Itoh T."/>
            <person name="Shigeta K."/>
            <person name="Senba T."/>
            <person name="Matsumura K."/>
            <person name="Nakajima Y."/>
            <person name="Mizuno T."/>
            <person name="Morinaga M."/>
            <person name="Sasaki M."/>
            <person name="Togashi T."/>
            <person name="Oyama M."/>
            <person name="Hata H."/>
            <person name="Watanabe M."/>
            <person name="Komatsu T."/>
            <person name="Mizushima-Sugano J."/>
            <person name="Satoh T."/>
            <person name="Shirai Y."/>
            <person name="Takahashi Y."/>
            <person name="Nakagawa K."/>
            <person name="Okumura K."/>
            <person name="Nagase T."/>
            <person name="Nomura N."/>
            <person name="Kikuchi H."/>
            <person name="Masuho Y."/>
            <person name="Yamashita R."/>
            <person name="Nakai K."/>
            <person name="Yada T."/>
            <person name="Nakamura Y."/>
            <person name="Ohara O."/>
            <person name="Isogai T."/>
            <person name="Sugano S."/>
        </authorList>
    </citation>
    <scope>NUCLEOTIDE SEQUENCE [LARGE SCALE MRNA] (ISOFORM 2)</scope>
</reference>
<reference key="2">
    <citation type="journal article" date="2006" name="Nature">
        <title>The DNA sequence and biological annotation of human chromosome 1.</title>
        <authorList>
            <person name="Gregory S.G."/>
            <person name="Barlow K.F."/>
            <person name="McLay K.E."/>
            <person name="Kaul R."/>
            <person name="Swarbreck D."/>
            <person name="Dunham A."/>
            <person name="Scott C.E."/>
            <person name="Howe K.L."/>
            <person name="Woodfine K."/>
            <person name="Spencer C.C.A."/>
            <person name="Jones M.C."/>
            <person name="Gillson C."/>
            <person name="Searle S."/>
            <person name="Zhou Y."/>
            <person name="Kokocinski F."/>
            <person name="McDonald L."/>
            <person name="Evans R."/>
            <person name="Phillips K."/>
            <person name="Atkinson A."/>
            <person name="Cooper R."/>
            <person name="Jones C."/>
            <person name="Hall R.E."/>
            <person name="Andrews T.D."/>
            <person name="Lloyd C."/>
            <person name="Ainscough R."/>
            <person name="Almeida J.P."/>
            <person name="Ambrose K.D."/>
            <person name="Anderson F."/>
            <person name="Andrew R.W."/>
            <person name="Ashwell R.I.S."/>
            <person name="Aubin K."/>
            <person name="Babbage A.K."/>
            <person name="Bagguley C.L."/>
            <person name="Bailey J."/>
            <person name="Beasley H."/>
            <person name="Bethel G."/>
            <person name="Bird C.P."/>
            <person name="Bray-Allen S."/>
            <person name="Brown J.Y."/>
            <person name="Brown A.J."/>
            <person name="Buckley D."/>
            <person name="Burton J."/>
            <person name="Bye J."/>
            <person name="Carder C."/>
            <person name="Chapman J.C."/>
            <person name="Clark S.Y."/>
            <person name="Clarke G."/>
            <person name="Clee C."/>
            <person name="Cobley V."/>
            <person name="Collier R.E."/>
            <person name="Corby N."/>
            <person name="Coville G.J."/>
            <person name="Davies J."/>
            <person name="Deadman R."/>
            <person name="Dunn M."/>
            <person name="Earthrowl M."/>
            <person name="Ellington A.G."/>
            <person name="Errington H."/>
            <person name="Frankish A."/>
            <person name="Frankland J."/>
            <person name="French L."/>
            <person name="Garner P."/>
            <person name="Garnett J."/>
            <person name="Gay L."/>
            <person name="Ghori M.R.J."/>
            <person name="Gibson R."/>
            <person name="Gilby L.M."/>
            <person name="Gillett W."/>
            <person name="Glithero R.J."/>
            <person name="Grafham D.V."/>
            <person name="Griffiths C."/>
            <person name="Griffiths-Jones S."/>
            <person name="Grocock R."/>
            <person name="Hammond S."/>
            <person name="Harrison E.S.I."/>
            <person name="Hart E."/>
            <person name="Haugen E."/>
            <person name="Heath P.D."/>
            <person name="Holmes S."/>
            <person name="Holt K."/>
            <person name="Howden P.J."/>
            <person name="Hunt A.R."/>
            <person name="Hunt S.E."/>
            <person name="Hunter G."/>
            <person name="Isherwood J."/>
            <person name="James R."/>
            <person name="Johnson C."/>
            <person name="Johnson D."/>
            <person name="Joy A."/>
            <person name="Kay M."/>
            <person name="Kershaw J.K."/>
            <person name="Kibukawa M."/>
            <person name="Kimberley A.M."/>
            <person name="King A."/>
            <person name="Knights A.J."/>
            <person name="Lad H."/>
            <person name="Laird G."/>
            <person name="Lawlor S."/>
            <person name="Leongamornlert D.A."/>
            <person name="Lloyd D.M."/>
            <person name="Loveland J."/>
            <person name="Lovell J."/>
            <person name="Lush M.J."/>
            <person name="Lyne R."/>
            <person name="Martin S."/>
            <person name="Mashreghi-Mohammadi M."/>
            <person name="Matthews L."/>
            <person name="Matthews N.S.W."/>
            <person name="McLaren S."/>
            <person name="Milne S."/>
            <person name="Mistry S."/>
            <person name="Moore M.J.F."/>
            <person name="Nickerson T."/>
            <person name="O'Dell C.N."/>
            <person name="Oliver K."/>
            <person name="Palmeiri A."/>
            <person name="Palmer S.A."/>
            <person name="Parker A."/>
            <person name="Patel D."/>
            <person name="Pearce A.V."/>
            <person name="Peck A.I."/>
            <person name="Pelan S."/>
            <person name="Phelps K."/>
            <person name="Phillimore B.J."/>
            <person name="Plumb R."/>
            <person name="Rajan J."/>
            <person name="Raymond C."/>
            <person name="Rouse G."/>
            <person name="Saenphimmachak C."/>
            <person name="Sehra H.K."/>
            <person name="Sheridan E."/>
            <person name="Shownkeen R."/>
            <person name="Sims S."/>
            <person name="Skuce C.D."/>
            <person name="Smith M."/>
            <person name="Steward C."/>
            <person name="Subramanian S."/>
            <person name="Sycamore N."/>
            <person name="Tracey A."/>
            <person name="Tromans A."/>
            <person name="Van Helmond Z."/>
            <person name="Wall M."/>
            <person name="Wallis J.M."/>
            <person name="White S."/>
            <person name="Whitehead S.L."/>
            <person name="Wilkinson J.E."/>
            <person name="Willey D.L."/>
            <person name="Williams H."/>
            <person name="Wilming L."/>
            <person name="Wray P.W."/>
            <person name="Wu Z."/>
            <person name="Coulson A."/>
            <person name="Vaudin M."/>
            <person name="Sulston J.E."/>
            <person name="Durbin R.M."/>
            <person name="Hubbard T."/>
            <person name="Wooster R."/>
            <person name="Dunham I."/>
            <person name="Carter N.P."/>
            <person name="McVean G."/>
            <person name="Ross M.T."/>
            <person name="Harrow J."/>
            <person name="Olson M.V."/>
            <person name="Beck S."/>
            <person name="Rogers J."/>
            <person name="Bentley D.R."/>
        </authorList>
    </citation>
    <scope>NUCLEOTIDE SEQUENCE [LARGE SCALE GENOMIC DNA]</scope>
</reference>
<reference key="3">
    <citation type="journal article" date="2004" name="Genome Res.">
        <title>The status, quality, and expansion of the NIH full-length cDNA project: the Mammalian Gene Collection (MGC).</title>
        <authorList>
            <consortium name="The MGC Project Team"/>
        </authorList>
    </citation>
    <scope>NUCLEOTIDE SEQUENCE [LARGE SCALE MRNA] (ISOFORM 2)</scope>
</reference>
<reference key="4">
    <citation type="journal article" date="2008" name="Am. J. Hum. Genet.">
        <title>TBX15 mutations cause craniofacial dysmorphism, hypoplasia of scapula and pelvis, and short stature in Cousin syndrome.</title>
        <authorList>
            <person name="Lausch E."/>
            <person name="Hermanns P."/>
            <person name="Farin H.F."/>
            <person name="Alanay Y."/>
            <person name="Unger S."/>
            <person name="Nikkel S."/>
            <person name="Steinwender C."/>
            <person name="Scherer G."/>
            <person name="Spranger J."/>
            <person name="Zabel B."/>
            <person name="Kispert A."/>
            <person name="Superti-Furga A."/>
        </authorList>
    </citation>
    <scope>INVOLVEMENT IN COUSS</scope>
</reference>
<reference key="5">
    <citation type="journal article" date="2013" name="J. Proteome Res.">
        <title>Toward a comprehensive characterization of a human cancer cell phosphoproteome.</title>
        <authorList>
            <person name="Zhou H."/>
            <person name="Di Palma S."/>
            <person name="Preisinger C."/>
            <person name="Peng M."/>
            <person name="Polat A.N."/>
            <person name="Heck A.J."/>
            <person name="Mohammed S."/>
        </authorList>
    </citation>
    <scope>PHOSPHORYLATION [LARGE SCALE ANALYSIS] AT THR-330</scope>
    <scope>IDENTIFICATION BY MASS SPECTROMETRY [LARGE SCALE ANALYSIS]</scope>
    <source>
        <tissue>Erythroleukemia</tissue>
    </source>
</reference>
<comment type="function">
    <text evidence="1">Probable transcriptional regulator involved in the development of the skeleton of the limb, vertebral column and head. Acts by controlling the number of mesenchymal precursor cells and chondrocytes (By similarity).</text>
</comment>
<comment type="subunit">
    <text evidence="2">Can form a heterodimer with TBX18.</text>
</comment>
<comment type="interaction">
    <interactant intactId="EBI-10191361">
        <id>Q96SF7</id>
    </interactant>
    <interactant intactId="EBI-930964">
        <id>P54253</id>
        <label>ATXN1</label>
    </interactant>
    <organismsDiffer>false</organismsDiffer>
    <experiments>3</experiments>
</comment>
<comment type="interaction">
    <interactant intactId="EBI-10191361">
        <id>Q96SF7</id>
    </interactant>
    <interactant intactId="EBI-2880244">
        <id>Q6PKX4</id>
        <label>DOK6</label>
    </interactant>
    <organismsDiffer>false</organismsDiffer>
    <experiments>3</experiments>
</comment>
<comment type="interaction">
    <interactant intactId="EBI-10191361">
        <id>Q96SF7</id>
    </interactant>
    <interactant intactId="EBI-740376">
        <id>Q86UW9</id>
        <label>DTX2</label>
    </interactant>
    <organismsDiffer>false</organismsDiffer>
    <experiments>3</experiments>
</comment>
<comment type="interaction">
    <interactant intactId="EBI-10191361">
        <id>Q96SF7</id>
    </interactant>
    <interactant intactId="EBI-740785">
        <id>P49639</id>
        <label>HOXA1</label>
    </interactant>
    <organismsDiffer>false</organismsDiffer>
    <experiments>3</experiments>
</comment>
<comment type="interaction">
    <interactant intactId="EBI-10191361">
        <id>Q96SF7</id>
    </interactant>
    <interactant intactId="EBI-5662487">
        <id>Q8TDC0</id>
        <label>MYOZ3</label>
    </interactant>
    <organismsDiffer>false</organismsDiffer>
    <experiments>3</experiments>
</comment>
<comment type="interaction">
    <interactant intactId="EBI-10191361">
        <id>Q96SF7</id>
    </interactant>
    <interactant intactId="EBI-741158">
        <id>Q96HA8</id>
        <label>NTAQ1</label>
    </interactant>
    <organismsDiffer>false</organismsDiffer>
    <experiments>3</experiments>
</comment>
<comment type="interaction">
    <interactant intactId="EBI-10191361">
        <id>Q96SF7</id>
    </interactant>
    <interactant intactId="EBI-713847">
        <id>P56282</id>
        <label>POLE2</label>
    </interactant>
    <organismsDiffer>false</organismsDiffer>
    <experiments>3</experiments>
</comment>
<comment type="interaction">
    <interactant intactId="EBI-10191361">
        <id>Q96SF7</id>
    </interactant>
    <interactant intactId="EBI-2367123">
        <id>O94955</id>
        <label>RHOBTB3</label>
    </interactant>
    <organismsDiffer>false</organismsDiffer>
    <experiments>3</experiments>
</comment>
<comment type="interaction">
    <interactant intactId="EBI-10191361">
        <id>Q96SF7</id>
    </interactant>
    <interactant intactId="EBI-2824328">
        <id>O95947</id>
        <label>TBX6</label>
    </interactant>
    <organismsDiffer>false</organismsDiffer>
    <experiments>3</experiments>
</comment>
<comment type="interaction">
    <interactant intactId="EBI-10191361">
        <id>Q96SF7</id>
    </interactant>
    <interactant intactId="EBI-10239812">
        <id>Q96M29</id>
        <label>TEKT5</label>
    </interactant>
    <organismsDiffer>false</organismsDiffer>
    <experiments>3</experiments>
</comment>
<comment type="interaction">
    <interactant intactId="EBI-10191361">
        <id>Q96SF7</id>
    </interactant>
    <interactant intactId="EBI-10191303">
        <id>O95231</id>
        <label>VENTX</label>
    </interactant>
    <organismsDiffer>false</organismsDiffer>
    <experiments>4</experiments>
</comment>
<comment type="interaction">
    <interactant intactId="EBI-10191361">
        <id>Q96SF7</id>
    </interactant>
    <interactant intactId="EBI-11957216">
        <id>A8MV65-2</id>
        <label>VGLL3</label>
    </interactant>
    <organismsDiffer>false</organismsDiffer>
    <experiments>3</experiments>
</comment>
<comment type="subcellular location">
    <subcellularLocation>
        <location evidence="3">Nucleus</location>
    </subcellularLocation>
</comment>
<comment type="alternative products">
    <event type="alternative splicing"/>
    <isoform>
        <id>Q96SF7-1</id>
        <name>1</name>
        <sequence type="displayed"/>
    </isoform>
    <isoform>
        <id>Q96SF7-2</id>
        <name>2</name>
        <sequence type="described" ref="VSP_040036"/>
    </isoform>
</comment>
<comment type="disease" evidence="5">
    <disease id="DI-01439">
        <name>Cousin syndrome</name>
        <acronym>COUSS</acronym>
        <description>Defined as pelviscapular dysplasia with epiphyseal abnormalities, congenital dwarfism and facial dysmorphy (frontal bossing, hypertelorism, narrow palpebral fissures, deep set globes, strabismus, low-set posteriory rotated and unusually formed external ears, dysplasia of conchae, small chin, short neck with redundant skin folds, and a low hairline). Intelligence may vary from normal to moderately impaired. Radiographic features comprise aplasia of the body of the scapula, hypoplasia of the iliac bone, humeroradial synosthosis, dislocation of the femoral heads, and moderate brachydactyly.</description>
        <dbReference type="MIM" id="260660"/>
    </disease>
    <text>The disease is caused by variants affecting the gene represented in this entry.</text>
</comment>
<comment type="miscellaneous">
    <molecule>Isoform 1</molecule>
    <text>Gene prediction based on similarity to orthologs.</text>
</comment>
<proteinExistence type="evidence at protein level"/>
<sequence>MSERRRSAVALSSRAHAFSVEALIGSNKKRKLRDWEEKGLDLSMEALSPAGPLGDTEDAAAHGLEPHPDSEQSTGSDSEVLTERTSCSFSTHTDLASGAAGPVPAAMSSMEEIQVELQCADLWKRFHDIGTEMIITKAGRRMFPAMRVKITGLDPHQQYYIAMDIVPVDNKRYRYVYHSSKWMVAGNADSPVPPRVYIHPDSLASGDTWMRQVVSFDKLKLTNNELDDQGHIILHSMHKYQPRVHVIRKDFSSDLSPTKPVPVGDGVKTFNFPETVFTTVTAYQNQQITRLKIDRNPFAKGFRDSGRNRTGLEAIMETYAFWRPPVRTLTFEDFTTMQKQQGGSTGTSPTTSSTGTPSPSASSHLLSPSCSPPTFHLAPNTFNVGCRESQLCNLNLSDYPPCARSNMAALQSYPGLSDSGYNRLQSGTTSATQPSETFMPQRTPSLISGIPTPPSLPGNSKMEAYGGQLGSFPTSQFQYVMQAGNAASSSSSPHMFGGSHMQQSSYNAFSLHNPYNLYGYNFPTSPRLAASPEKLSASQSTLLCSSPSNGAFGERQYLPSGMEHSMHMISPSPNNQQATNTCDGRQYGAVPGSSSQMSVHMV</sequence>
<organism>
    <name type="scientific">Homo sapiens</name>
    <name type="common">Human</name>
    <dbReference type="NCBI Taxonomy" id="9606"/>
    <lineage>
        <taxon>Eukaryota</taxon>
        <taxon>Metazoa</taxon>
        <taxon>Chordata</taxon>
        <taxon>Craniata</taxon>
        <taxon>Vertebrata</taxon>
        <taxon>Euteleostomi</taxon>
        <taxon>Mammalia</taxon>
        <taxon>Eutheria</taxon>
        <taxon>Euarchontoglires</taxon>
        <taxon>Primates</taxon>
        <taxon>Haplorrhini</taxon>
        <taxon>Catarrhini</taxon>
        <taxon>Hominidae</taxon>
        <taxon>Homo</taxon>
    </lineage>
</organism>
<feature type="chain" id="PRO_0000184444" description="T-box transcription factor TBX15">
    <location>
        <begin position="1"/>
        <end position="602"/>
    </location>
</feature>
<feature type="DNA-binding region" description="T-box" evidence="3">
    <location>
        <begin position="122"/>
        <end position="304"/>
    </location>
</feature>
<feature type="region of interest" description="Disordered" evidence="4">
    <location>
        <begin position="46"/>
        <end position="84"/>
    </location>
</feature>
<feature type="region of interest" description="Disordered" evidence="4">
    <location>
        <begin position="338"/>
        <end position="369"/>
    </location>
</feature>
<feature type="region of interest" description="Disordered" evidence="4">
    <location>
        <begin position="425"/>
        <end position="447"/>
    </location>
</feature>
<feature type="compositionally biased region" description="Polar residues" evidence="4">
    <location>
        <begin position="71"/>
        <end position="84"/>
    </location>
</feature>
<feature type="compositionally biased region" description="Low complexity" evidence="4">
    <location>
        <begin position="346"/>
        <end position="369"/>
    </location>
</feature>
<feature type="compositionally biased region" description="Polar residues" evidence="4">
    <location>
        <begin position="425"/>
        <end position="446"/>
    </location>
</feature>
<feature type="modified residue" description="Phosphothreonine" evidence="8">
    <location>
        <position position="330"/>
    </location>
</feature>
<feature type="splice variant" id="VSP_040036" description="In isoform 2." evidence="6 7">
    <location>
        <begin position="1"/>
        <end position="106"/>
    </location>
</feature>
<feature type="sequence variant" id="VAR_055341" description="In dbSNP:rs10494217.">
    <original>H</original>
    <variation>N</variation>
    <location>
        <position position="156"/>
    </location>
</feature>
<accession>Q96SF7</accession>
<accession>Q08E76</accession>
<accession>Q5JT54</accession>
<accession>Q5T9S7</accession>
<dbReference type="EMBL" id="AK127536">
    <property type="protein sequence ID" value="BAG54518.1"/>
    <property type="molecule type" value="mRNA"/>
</dbReference>
<dbReference type="EMBL" id="AL139420">
    <property type="status" value="NOT_ANNOTATED_CDS"/>
    <property type="molecule type" value="Genomic_DNA"/>
</dbReference>
<dbReference type="EMBL" id="AL357045">
    <property type="status" value="NOT_ANNOTATED_CDS"/>
    <property type="molecule type" value="Genomic_DNA"/>
</dbReference>
<dbReference type="EMBL" id="BC122553">
    <property type="protein sequence ID" value="AAI22554.2"/>
    <property type="molecule type" value="mRNA"/>
</dbReference>
<dbReference type="CCDS" id="CCDS30816.1">
    <molecule id="Q96SF7-2"/>
</dbReference>
<dbReference type="CCDS" id="CCDS81360.1">
    <molecule id="Q96SF7-1"/>
</dbReference>
<dbReference type="RefSeq" id="NP_001317606.1">
    <molecule id="Q96SF7-1"/>
    <property type="nucleotide sequence ID" value="NM_001330677.2"/>
</dbReference>
<dbReference type="RefSeq" id="NP_689593.2">
    <molecule id="Q96SF7-2"/>
    <property type="nucleotide sequence ID" value="NM_152380.2"/>
</dbReference>
<dbReference type="RefSeq" id="XP_047285094.1">
    <molecule id="Q96SF7-2"/>
    <property type="nucleotide sequence ID" value="XM_047429138.1"/>
</dbReference>
<dbReference type="RefSeq" id="XP_054194494.1">
    <molecule id="Q96SF7-2"/>
    <property type="nucleotide sequence ID" value="XM_054338519.1"/>
</dbReference>
<dbReference type="SMR" id="Q96SF7"/>
<dbReference type="BioGRID" id="112775">
    <property type="interactions" value="14"/>
</dbReference>
<dbReference type="FunCoup" id="Q96SF7">
    <property type="interactions" value="206"/>
</dbReference>
<dbReference type="IntAct" id="Q96SF7">
    <property type="interactions" value="13"/>
</dbReference>
<dbReference type="MINT" id="Q96SF7"/>
<dbReference type="STRING" id="9606.ENSP00000358437"/>
<dbReference type="GlyGen" id="Q96SF7">
    <property type="glycosylation" value="1 site"/>
</dbReference>
<dbReference type="iPTMnet" id="Q96SF7"/>
<dbReference type="PhosphoSitePlus" id="Q96SF7"/>
<dbReference type="BioMuta" id="TBX15"/>
<dbReference type="DMDM" id="59803103"/>
<dbReference type="jPOST" id="Q96SF7"/>
<dbReference type="MassIVE" id="Q96SF7"/>
<dbReference type="PaxDb" id="9606-ENSP00000207157"/>
<dbReference type="PeptideAtlas" id="Q96SF7"/>
<dbReference type="ProteomicsDB" id="78110">
    <molecule id="Q96SF7-1"/>
</dbReference>
<dbReference type="ProteomicsDB" id="78111">
    <molecule id="Q96SF7-2"/>
</dbReference>
<dbReference type="Antibodypedia" id="20199">
    <property type="antibodies" value="143 antibodies from 26 providers"/>
</dbReference>
<dbReference type="DNASU" id="6913"/>
<dbReference type="Ensembl" id="ENST00000207157.7">
    <molecule id="Q96SF7-2"/>
    <property type="protein sequence ID" value="ENSP00000207157.3"/>
    <property type="gene ID" value="ENSG00000092607.15"/>
</dbReference>
<dbReference type="Ensembl" id="ENST00000369429.5">
    <molecule id="Q96SF7-1"/>
    <property type="protein sequence ID" value="ENSP00000358437.3"/>
    <property type="gene ID" value="ENSG00000092607.15"/>
</dbReference>
<dbReference type="GeneID" id="6913"/>
<dbReference type="KEGG" id="hsa:6913"/>
<dbReference type="MANE-Select" id="ENST00000369429.5">
    <property type="protein sequence ID" value="ENSP00000358437.3"/>
    <property type="RefSeq nucleotide sequence ID" value="NM_001330677.2"/>
    <property type="RefSeq protein sequence ID" value="NP_001317606.1"/>
</dbReference>
<dbReference type="UCSC" id="uc001ehl.2">
    <molecule id="Q96SF7-1"/>
    <property type="organism name" value="human"/>
</dbReference>
<dbReference type="AGR" id="HGNC:11594"/>
<dbReference type="CTD" id="6913"/>
<dbReference type="DisGeNET" id="6913"/>
<dbReference type="GeneCards" id="TBX15"/>
<dbReference type="HGNC" id="HGNC:11594">
    <property type="gene designation" value="TBX15"/>
</dbReference>
<dbReference type="HPA" id="ENSG00000092607">
    <property type="expression patterns" value="Tissue enhanced (liver, skeletal muscle, tongue)"/>
</dbReference>
<dbReference type="MalaCards" id="TBX15"/>
<dbReference type="MIM" id="260660">
    <property type="type" value="phenotype"/>
</dbReference>
<dbReference type="MIM" id="604127">
    <property type="type" value="gene"/>
</dbReference>
<dbReference type="neXtProt" id="NX_Q96SF7"/>
<dbReference type="OpenTargets" id="ENSG00000092607"/>
<dbReference type="Orphanet" id="93333">
    <property type="disease" value="Pelviscapular dysplasia"/>
</dbReference>
<dbReference type="PharmGKB" id="PA36357"/>
<dbReference type="VEuPathDB" id="HostDB:ENSG00000092607"/>
<dbReference type="eggNOG" id="KOG3586">
    <property type="taxonomic scope" value="Eukaryota"/>
</dbReference>
<dbReference type="GeneTree" id="ENSGT00940000159013"/>
<dbReference type="HOGENOM" id="CLU_030727_0_0_1"/>
<dbReference type="InParanoid" id="Q96SF7"/>
<dbReference type="OMA" id="QTANTCD"/>
<dbReference type="OrthoDB" id="7442607at2759"/>
<dbReference type="PAN-GO" id="Q96SF7">
    <property type="GO annotations" value="4 GO annotations based on evolutionary models"/>
</dbReference>
<dbReference type="PhylomeDB" id="Q96SF7"/>
<dbReference type="TreeFam" id="TF106341"/>
<dbReference type="PathwayCommons" id="Q96SF7"/>
<dbReference type="SignaLink" id="Q96SF7"/>
<dbReference type="BioGRID-ORCS" id="6913">
    <property type="hits" value="18 hits in 1176 CRISPR screens"/>
</dbReference>
<dbReference type="ChiTaRS" id="TBX15">
    <property type="organism name" value="human"/>
</dbReference>
<dbReference type="GenomeRNAi" id="6913"/>
<dbReference type="Pharos" id="Q96SF7">
    <property type="development level" value="Tbio"/>
</dbReference>
<dbReference type="PRO" id="PR:Q96SF7"/>
<dbReference type="Proteomes" id="UP000005640">
    <property type="component" value="Chromosome 1"/>
</dbReference>
<dbReference type="RNAct" id="Q96SF7">
    <property type="molecule type" value="protein"/>
</dbReference>
<dbReference type="Bgee" id="ENSG00000092607">
    <property type="expression patterns" value="Expressed in gastrocnemius and 133 other cell types or tissues"/>
</dbReference>
<dbReference type="ExpressionAtlas" id="Q96SF7">
    <property type="expression patterns" value="baseline and differential"/>
</dbReference>
<dbReference type="GO" id="GO:0000785">
    <property type="term" value="C:chromatin"/>
    <property type="evidence" value="ECO:0000247"/>
    <property type="project" value="NTNU_SB"/>
</dbReference>
<dbReference type="GO" id="GO:0005634">
    <property type="term" value="C:nucleus"/>
    <property type="evidence" value="ECO:0000318"/>
    <property type="project" value="GO_Central"/>
</dbReference>
<dbReference type="GO" id="GO:0090571">
    <property type="term" value="C:RNA polymerase II transcription repressor complex"/>
    <property type="evidence" value="ECO:0007669"/>
    <property type="project" value="Ensembl"/>
</dbReference>
<dbReference type="GO" id="GO:0000981">
    <property type="term" value="F:DNA-binding transcription factor activity, RNA polymerase II-specific"/>
    <property type="evidence" value="ECO:0000247"/>
    <property type="project" value="NTNU_SB"/>
</dbReference>
<dbReference type="GO" id="GO:0001227">
    <property type="term" value="F:DNA-binding transcription repressor activity, RNA polymerase II-specific"/>
    <property type="evidence" value="ECO:0007669"/>
    <property type="project" value="Ensembl"/>
</dbReference>
<dbReference type="GO" id="GO:0042803">
    <property type="term" value="F:protein homodimerization activity"/>
    <property type="evidence" value="ECO:0007669"/>
    <property type="project" value="Ensembl"/>
</dbReference>
<dbReference type="GO" id="GO:0000978">
    <property type="term" value="F:RNA polymerase II cis-regulatory region sequence-specific DNA binding"/>
    <property type="evidence" value="ECO:0000318"/>
    <property type="project" value="GO_Central"/>
</dbReference>
<dbReference type="GO" id="GO:1990837">
    <property type="term" value="F:sequence-specific double-stranded DNA binding"/>
    <property type="evidence" value="ECO:0000314"/>
    <property type="project" value="ARUK-UCL"/>
</dbReference>
<dbReference type="GO" id="GO:0001708">
    <property type="term" value="P:cell fate specification"/>
    <property type="evidence" value="ECO:0000318"/>
    <property type="project" value="GO_Central"/>
</dbReference>
<dbReference type="GO" id="GO:0048701">
    <property type="term" value="P:embryonic cranial skeleton morphogenesis"/>
    <property type="evidence" value="ECO:0007669"/>
    <property type="project" value="Ensembl"/>
</dbReference>
<dbReference type="GO" id="GO:0045893">
    <property type="term" value="P:positive regulation of DNA-templated transcription"/>
    <property type="evidence" value="ECO:0007669"/>
    <property type="project" value="InterPro"/>
</dbReference>
<dbReference type="GO" id="GO:0006357">
    <property type="term" value="P:regulation of transcription by RNA polymerase II"/>
    <property type="evidence" value="ECO:0000318"/>
    <property type="project" value="GO_Central"/>
</dbReference>
<dbReference type="CDD" id="cd20198">
    <property type="entry name" value="T-box_TBX15-like"/>
    <property type="match status" value="1"/>
</dbReference>
<dbReference type="FunFam" id="2.60.40.820:FF:000001">
    <property type="entry name" value="T-box transcription factor TBX18"/>
    <property type="match status" value="1"/>
</dbReference>
<dbReference type="Gene3D" id="2.60.40.820">
    <property type="entry name" value="Transcription factor, T-box"/>
    <property type="match status" value="1"/>
</dbReference>
<dbReference type="InterPro" id="IPR008967">
    <property type="entry name" value="p53-like_TF_DNA-bd_sf"/>
</dbReference>
<dbReference type="InterPro" id="IPR046360">
    <property type="entry name" value="T-box_DNA-bd"/>
</dbReference>
<dbReference type="InterPro" id="IPR036960">
    <property type="entry name" value="T-box_sf"/>
</dbReference>
<dbReference type="InterPro" id="IPR001699">
    <property type="entry name" value="TF_T-box"/>
</dbReference>
<dbReference type="InterPro" id="IPR018186">
    <property type="entry name" value="TF_T-box_CS"/>
</dbReference>
<dbReference type="PANTHER" id="PTHR11267">
    <property type="entry name" value="T-BOX PROTEIN-RELATED"/>
    <property type="match status" value="1"/>
</dbReference>
<dbReference type="PANTHER" id="PTHR11267:SF98">
    <property type="entry name" value="T-BOX TRANSCRIPTION FACTOR TBX15"/>
    <property type="match status" value="1"/>
</dbReference>
<dbReference type="Pfam" id="PF00907">
    <property type="entry name" value="T-box"/>
    <property type="match status" value="1"/>
</dbReference>
<dbReference type="PRINTS" id="PR00937">
    <property type="entry name" value="TBOX"/>
</dbReference>
<dbReference type="SMART" id="SM00425">
    <property type="entry name" value="TBOX"/>
    <property type="match status" value="1"/>
</dbReference>
<dbReference type="SUPFAM" id="SSF49417">
    <property type="entry name" value="p53-like transcription factors"/>
    <property type="match status" value="1"/>
</dbReference>
<dbReference type="PROSITE" id="PS01283">
    <property type="entry name" value="TBOX_1"/>
    <property type="match status" value="1"/>
</dbReference>
<dbReference type="PROSITE" id="PS01264">
    <property type="entry name" value="TBOX_2"/>
    <property type="match status" value="1"/>
</dbReference>
<dbReference type="PROSITE" id="PS50252">
    <property type="entry name" value="TBOX_3"/>
    <property type="match status" value="1"/>
</dbReference>
<name>TBX15_HUMAN</name>
<gene>
    <name type="primary">TBX15</name>
    <name type="synonym">TBX14</name>
</gene>
<evidence type="ECO:0000250" key="1"/>
<evidence type="ECO:0000250" key="2">
    <source>
        <dbReference type="UniProtKB" id="O70306"/>
    </source>
</evidence>
<evidence type="ECO:0000255" key="3">
    <source>
        <dbReference type="PROSITE-ProRule" id="PRU00201"/>
    </source>
</evidence>
<evidence type="ECO:0000256" key="4">
    <source>
        <dbReference type="SAM" id="MobiDB-lite"/>
    </source>
</evidence>
<evidence type="ECO:0000269" key="5">
    <source>
    </source>
</evidence>
<evidence type="ECO:0000303" key="6">
    <source>
    </source>
</evidence>
<evidence type="ECO:0000303" key="7">
    <source>
    </source>
</evidence>
<evidence type="ECO:0007744" key="8">
    <source>
    </source>
</evidence>
<keyword id="KW-0025">Alternative splicing</keyword>
<keyword id="KW-0238">DNA-binding</keyword>
<keyword id="KW-0539">Nucleus</keyword>
<keyword id="KW-0597">Phosphoprotein</keyword>
<keyword id="KW-1267">Proteomics identification</keyword>
<keyword id="KW-1185">Reference proteome</keyword>
<keyword id="KW-0804">Transcription</keyword>
<keyword id="KW-0805">Transcription regulation</keyword>